<protein>
    <recommendedName>
        <fullName>Serendipity locus protein alpha</fullName>
    </recommendedName>
</protein>
<comment type="function">
    <text evidence="1">Required for the cellularization of the syncytial blastoderm embryo. Involved in the localization of the actin filaments just prior to and during plasma membrane invagination. Sry-alpha together with nullo and bnk may provide auxiliary functions, by acting both to stabilize a large and dynamic microfilament structure and regulate its functions (By similarity).</text>
</comment>
<comment type="subcellular location">
    <subcellularLocation>
        <location evidence="1">Cytoplasm</location>
    </subcellularLocation>
    <subcellularLocation>
        <location evidence="1">Cell membrane</location>
        <topology evidence="1">Peripheral membrane protein</topology>
        <orientation evidence="1">Cytoplasmic side</orientation>
    </subcellularLocation>
    <text evidence="1">Inner membrane-associated and cytoplasmic. Colocalizes with the structural transitions in the microfilament network during cellularization (By similarity).</text>
</comment>
<comment type="developmental stage">
    <text evidence="2">Blastoderm.</text>
</comment>
<comment type="sequence caution" evidence="3">
    <conflict type="erroneous gene model prediction">
        <sequence resource="EMBL-CDS" id="EAL26772"/>
    </conflict>
</comment>
<name>SRYA_DROPS</name>
<evidence type="ECO:0000250" key="1"/>
<evidence type="ECO:0000269" key="2">
    <source>
    </source>
</evidence>
<evidence type="ECO:0000305" key="3"/>
<dbReference type="EMBL" id="L19536">
    <property type="protein sequence ID" value="AAA17045.1"/>
    <property type="molecule type" value="Unassigned_DNA"/>
</dbReference>
<dbReference type="EMBL" id="CM000070">
    <property type="protein sequence ID" value="EAL26772.1"/>
    <property type="status" value="ALT_SEQ"/>
    <property type="molecule type" value="Genomic_DNA"/>
</dbReference>
<dbReference type="RefSeq" id="XP_001357638.1">
    <property type="nucleotide sequence ID" value="XM_001357601.4"/>
</dbReference>
<dbReference type="SMR" id="Q07964"/>
<dbReference type="FunCoup" id="Q07964">
    <property type="interactions" value="51"/>
</dbReference>
<dbReference type="STRING" id="46245.Q07964"/>
<dbReference type="EnsemblMetazoa" id="FBtr0284667">
    <property type="protein sequence ID" value="FBpp0283105"/>
    <property type="gene ID" value="FBgn0243553"/>
</dbReference>
<dbReference type="GeneID" id="4800250"/>
<dbReference type="KEGG" id="dpo:4800250"/>
<dbReference type="CTD" id="43571"/>
<dbReference type="eggNOG" id="ENOG502SBC0">
    <property type="taxonomic scope" value="Eukaryota"/>
</dbReference>
<dbReference type="HOGENOM" id="CLU_030377_0_0_1"/>
<dbReference type="InParanoid" id="Q07964"/>
<dbReference type="OMA" id="CIVPAFQ"/>
<dbReference type="PhylomeDB" id="Q07964"/>
<dbReference type="Proteomes" id="UP000001819">
    <property type="component" value="Chromosome 2"/>
</dbReference>
<dbReference type="Bgee" id="FBgn0243553">
    <property type="expression patterns" value="Expressed in female reproductive system and 2 other cell types or tissues"/>
</dbReference>
<dbReference type="GO" id="GO:0005912">
    <property type="term" value="C:adherens junction"/>
    <property type="evidence" value="ECO:0007669"/>
    <property type="project" value="TreeGrafter"/>
</dbReference>
<dbReference type="GO" id="GO:0016342">
    <property type="term" value="C:catenin complex"/>
    <property type="evidence" value="ECO:0007669"/>
    <property type="project" value="TreeGrafter"/>
</dbReference>
<dbReference type="GO" id="GO:0005737">
    <property type="term" value="C:cytoplasm"/>
    <property type="evidence" value="ECO:0007669"/>
    <property type="project" value="UniProtKB-SubCell"/>
</dbReference>
<dbReference type="GO" id="GO:0051015">
    <property type="term" value="F:actin filament binding"/>
    <property type="evidence" value="ECO:0007669"/>
    <property type="project" value="TreeGrafter"/>
</dbReference>
<dbReference type="GO" id="GO:0008013">
    <property type="term" value="F:beta-catenin binding"/>
    <property type="evidence" value="ECO:0007669"/>
    <property type="project" value="TreeGrafter"/>
</dbReference>
<dbReference type="GO" id="GO:0016477">
    <property type="term" value="P:cell migration"/>
    <property type="evidence" value="ECO:0007669"/>
    <property type="project" value="TreeGrafter"/>
</dbReference>
<dbReference type="GO" id="GO:0098609">
    <property type="term" value="P:cell-cell adhesion"/>
    <property type="evidence" value="ECO:0007669"/>
    <property type="project" value="TreeGrafter"/>
</dbReference>
<dbReference type="GO" id="GO:0007349">
    <property type="term" value="P:cellularization"/>
    <property type="evidence" value="ECO:0007669"/>
    <property type="project" value="InterPro"/>
</dbReference>
<dbReference type="Gene3D" id="1.20.120.810">
    <property type="entry name" value="Vinculin, Vh2 four-helix bundle"/>
    <property type="match status" value="1"/>
</dbReference>
<dbReference type="InterPro" id="IPR008837">
    <property type="entry name" value="Serendipity_A"/>
</dbReference>
<dbReference type="PANTHER" id="PTHR18914">
    <property type="entry name" value="ALPHA CATENIN"/>
    <property type="match status" value="1"/>
</dbReference>
<dbReference type="PANTHER" id="PTHR18914:SF33">
    <property type="entry name" value="RE47911P-RELATED"/>
    <property type="match status" value="1"/>
</dbReference>
<dbReference type="Pfam" id="PF05482">
    <property type="entry name" value="Serendipity_A"/>
    <property type="match status" value="1"/>
</dbReference>
<keyword id="KW-1003">Cell membrane</keyword>
<keyword id="KW-0963">Cytoplasm</keyword>
<keyword id="KW-0217">Developmental protein</keyword>
<keyword id="KW-0472">Membrane</keyword>
<keyword id="KW-1185">Reference proteome</keyword>
<organism>
    <name type="scientific">Drosophila pseudoobscura pseudoobscura</name>
    <name type="common">Fruit fly</name>
    <dbReference type="NCBI Taxonomy" id="46245"/>
    <lineage>
        <taxon>Eukaryota</taxon>
        <taxon>Metazoa</taxon>
        <taxon>Ecdysozoa</taxon>
        <taxon>Arthropoda</taxon>
        <taxon>Hexapoda</taxon>
        <taxon>Insecta</taxon>
        <taxon>Pterygota</taxon>
        <taxon>Neoptera</taxon>
        <taxon>Endopterygota</taxon>
        <taxon>Diptera</taxon>
        <taxon>Brachycera</taxon>
        <taxon>Muscomorpha</taxon>
        <taxon>Ephydroidea</taxon>
        <taxon>Drosophilidae</taxon>
        <taxon>Drosophila</taxon>
        <taxon>Sophophora</taxon>
    </lineage>
</organism>
<proteinExistence type="evidence at transcript level"/>
<gene>
    <name type="primary">Sry-alpha</name>
    <name type="synonym">Sry-a</name>
    <name type="ORF">GA14740</name>
</gene>
<sequence length="551" mass="61840">MESLLRQLSICNELIAQGPACPVGNIAWLNEFCATFLDFASELKAHLPEIAPRWGAPEGGNNIEVETIFLCLTQVVTCITQLERTINIESKFGHETTPMTRLHFLDRIDWCVRRIYVSLSQLDLHQESGAADNLEDHTFVELMDLALDHLEAFMEGLGNTTSNFLYIEEENDTNDACQLGSIINHIVRHALAFANVALEADKKALSELCETLLSECTTFLEGSAELNPGHRKLEALSLERALYGLETFLNEALLHSIFASLVELENTPINRLRHALQEQESESGLTEKLVSDFDTNMDRIQQIGVLAIAFSQDVKTKTIVRSCLASLESLDACIVPALQSSALHHADILEHHFNDEMLIFRNLIHDIIDSRSLVNNYLDMLAESLHIHIAGKSVPREYLLIVQMGSVLAEHFRLPVNYSALSDDGKRVHKDLILILRECLAAVSLATPVDPKRIVKRLKILYSVLAKLRDVIDKNVHDSVFNLSSRRQITNATRTLLRSCKSKSKRQRSYVKQSQDSVVPDPHNYTSSIANSISNDGDLISFQLTEILRIN</sequence>
<accession>Q07964</accession>
<accession>Q29C75</accession>
<reference key="1">
    <citation type="journal article" date="1993" name="Development">
        <title>Relationship between expression of serendipity alpha and cellularisation of the Drosophila embryo as revealed by interspecific transformation.</title>
        <authorList>
            <person name="Ibnsouda S."/>
            <person name="Schweisguth F."/>
            <person name="de Billy G."/>
            <person name="Vincent A."/>
        </authorList>
    </citation>
    <scope>NUCLEOTIDE SEQUENCE</scope>
    <scope>DEVELOPMENTAL STAGE</scope>
</reference>
<reference key="2">
    <citation type="journal article" date="2005" name="Genome Res.">
        <title>Comparative genome sequencing of Drosophila pseudoobscura: chromosomal, gene, and cis-element evolution.</title>
        <authorList>
            <person name="Richards S."/>
            <person name="Liu Y."/>
            <person name="Bettencourt B.R."/>
            <person name="Hradecky P."/>
            <person name="Letovsky S."/>
            <person name="Nielsen R."/>
            <person name="Thornton K."/>
            <person name="Hubisz M.J."/>
            <person name="Chen R."/>
            <person name="Meisel R.P."/>
            <person name="Couronne O."/>
            <person name="Hua S."/>
            <person name="Smith M.A."/>
            <person name="Zhang P."/>
            <person name="Liu J."/>
            <person name="Bussemaker H.J."/>
            <person name="van Batenburg M.F."/>
            <person name="Howells S.L."/>
            <person name="Scherer S.E."/>
            <person name="Sodergren E."/>
            <person name="Matthews B.B."/>
            <person name="Crosby M.A."/>
            <person name="Schroeder A.J."/>
            <person name="Ortiz-Barrientos D."/>
            <person name="Rives C.M."/>
            <person name="Metzker M.L."/>
            <person name="Muzny D.M."/>
            <person name="Scott G."/>
            <person name="Steffen D."/>
            <person name="Wheeler D.A."/>
            <person name="Worley K.C."/>
            <person name="Havlak P."/>
            <person name="Durbin K.J."/>
            <person name="Egan A."/>
            <person name="Gill R."/>
            <person name="Hume J."/>
            <person name="Morgan M.B."/>
            <person name="Miner G."/>
            <person name="Hamilton C."/>
            <person name="Huang Y."/>
            <person name="Waldron L."/>
            <person name="Verduzco D."/>
            <person name="Clerc-Blankenburg K.P."/>
            <person name="Dubchak I."/>
            <person name="Noor M.A.F."/>
            <person name="Anderson W."/>
            <person name="White K.P."/>
            <person name="Clark A.G."/>
            <person name="Schaeffer S.W."/>
            <person name="Gelbart W.M."/>
            <person name="Weinstock G.M."/>
            <person name="Gibbs R.A."/>
        </authorList>
    </citation>
    <scope>NUCLEOTIDE SEQUENCE [LARGE SCALE GENOMIC DNA]</scope>
    <source>
        <strain>MV2-25 / Tucson 14011-0121.94</strain>
    </source>
</reference>
<feature type="chain" id="PRO_0000072198" description="Serendipity locus protein alpha">
    <location>
        <begin position="1"/>
        <end position="551"/>
    </location>
</feature>
<feature type="sequence conflict" description="In Ref. 1; AAA17045." evidence="3" ref="1">
    <original>RWGA</original>
    <variation>DGG</variation>
    <location>
        <begin position="53"/>
        <end position="56"/>
    </location>
</feature>
<feature type="sequence conflict" description="In Ref. 1; AAA17045." evidence="3" ref="1">
    <original>I</original>
    <variation>V</variation>
    <location>
        <position position="88"/>
    </location>
</feature>
<feature type="sequence conflict" description="In Ref. 1; AAA17045." evidence="3" ref="1">
    <original>E</original>
    <variation>G</variation>
    <location>
        <position position="135"/>
    </location>
</feature>
<feature type="sequence conflict" description="In Ref. 1; AAA17045." evidence="3" ref="1">
    <original>N</original>
    <variation>K</variation>
    <location>
        <position position="195"/>
    </location>
</feature>
<feature type="sequence conflict" description="In Ref. 1; AAA17045." evidence="3" ref="1">
    <original>S</original>
    <variation>L</variation>
    <location>
        <position position="291"/>
    </location>
</feature>
<feature type="sequence conflict" description="In Ref. 1; AAA17045." evidence="3" ref="1">
    <original>D</original>
    <variation>G</variation>
    <location>
        <position position="355"/>
    </location>
</feature>
<feature type="sequence conflict" description="In Ref. 1; AAA17045." evidence="3" ref="1">
    <original>H</original>
    <variation>R</variation>
    <location>
        <position position="388"/>
    </location>
</feature>
<feature type="sequence conflict" description="In Ref. 1; AAA17045." evidence="3" ref="1">
    <original>KL</original>
    <variation>NV</variation>
    <location>
        <begin position="467"/>
        <end position="468"/>
    </location>
</feature>
<feature type="sequence conflict" description="In Ref. 1; AAA17045." evidence="3" ref="1">
    <location>
        <position position="490"/>
    </location>
</feature>
<feature type="sequence conflict" description="In Ref. 1; AAA17045." evidence="3" ref="1">
    <original>Y</original>
    <variation>F</variation>
    <location>
        <position position="510"/>
    </location>
</feature>